<keyword id="KW-0031">Aminopeptidase</keyword>
<keyword id="KW-1015">Disulfide bond</keyword>
<keyword id="KW-0325">Glycoprotein</keyword>
<keyword id="KW-0378">Hydrolase</keyword>
<keyword id="KW-0479">Metal-binding</keyword>
<keyword id="KW-0645">Protease</keyword>
<keyword id="KW-1185">Reference proteome</keyword>
<keyword id="KW-0964">Secreted</keyword>
<keyword id="KW-0732">Signal</keyword>
<keyword id="KW-0862">Zinc</keyword>
<keyword id="KW-0865">Zymogen</keyword>
<reference key="1">
    <citation type="journal article" date="2015" name="PLoS Genet.">
        <title>The dynamic genome and transcriptome of the human fungal pathogen Blastomyces and close relative Emmonsia.</title>
        <authorList>
            <person name="Munoz J.F."/>
            <person name="Gauthier G.M."/>
            <person name="Desjardins C.A."/>
            <person name="Gallo J.E."/>
            <person name="Holder J."/>
            <person name="Sullivan T.D."/>
            <person name="Marty A.J."/>
            <person name="Carmen J.C."/>
            <person name="Chen Z."/>
            <person name="Ding L."/>
            <person name="Gujja S."/>
            <person name="Magrini V."/>
            <person name="Misas E."/>
            <person name="Mitreva M."/>
            <person name="Priest M."/>
            <person name="Saif S."/>
            <person name="Whiston E.A."/>
            <person name="Young S."/>
            <person name="Zeng Q."/>
            <person name="Goldman W.E."/>
            <person name="Mardis E.R."/>
            <person name="Taylor J.W."/>
            <person name="McEwen J.G."/>
            <person name="Clay O.K."/>
            <person name="Klein B.S."/>
            <person name="Cuomo C.A."/>
        </authorList>
    </citation>
    <scope>NUCLEOTIDE SEQUENCE [LARGE SCALE GENOMIC DNA]</scope>
    <source>
        <strain>SLH14081</strain>
    </source>
</reference>
<proteinExistence type="inferred from homology"/>
<accession>C5JX80</accession>
<accession>A0A179UZF1</accession>
<evidence type="ECO:0000250" key="1"/>
<evidence type="ECO:0000255" key="2"/>
<evidence type="ECO:0000305" key="3"/>
<feature type="signal peptide" evidence="2">
    <location>
        <begin position="1"/>
        <end position="19"/>
    </location>
</feature>
<feature type="propeptide" id="PRO_0000412384" evidence="1">
    <location>
        <begin position="20"/>
        <end position="87"/>
    </location>
</feature>
<feature type="chain" id="PRO_0000412385" description="Leucine aminopeptidase 1">
    <location>
        <begin position="88"/>
        <end position="385"/>
    </location>
</feature>
<feature type="binding site" evidence="1">
    <location>
        <position position="185"/>
    </location>
    <ligand>
        <name>Zn(2+)</name>
        <dbReference type="ChEBI" id="CHEBI:29105"/>
        <label>1</label>
    </ligand>
</feature>
<feature type="binding site" evidence="1">
    <location>
        <position position="204"/>
    </location>
    <ligand>
        <name>Zn(2+)</name>
        <dbReference type="ChEBI" id="CHEBI:29105"/>
        <label>1</label>
    </ligand>
</feature>
<feature type="binding site" evidence="1">
    <location>
        <position position="204"/>
    </location>
    <ligand>
        <name>Zn(2+)</name>
        <dbReference type="ChEBI" id="CHEBI:29105"/>
        <label>2</label>
        <note>catalytic</note>
    </ligand>
</feature>
<feature type="binding site" evidence="1">
    <location>
        <position position="243"/>
    </location>
    <ligand>
        <name>Zn(2+)</name>
        <dbReference type="ChEBI" id="CHEBI:29105"/>
        <label>2</label>
        <note>catalytic</note>
    </ligand>
</feature>
<feature type="binding site" evidence="1">
    <location>
        <position position="270"/>
    </location>
    <ligand>
        <name>Zn(2+)</name>
        <dbReference type="ChEBI" id="CHEBI:29105"/>
        <label>1</label>
    </ligand>
</feature>
<feature type="binding site" evidence="1">
    <location>
        <position position="352"/>
    </location>
    <ligand>
        <name>Zn(2+)</name>
        <dbReference type="ChEBI" id="CHEBI:29105"/>
        <label>2</label>
        <note>catalytic</note>
    </ligand>
</feature>
<feature type="glycosylation site" description="N-linked (GlcNAc...) asparagine" evidence="2">
    <location>
        <position position="177"/>
    </location>
</feature>
<feature type="glycosylation site" description="N-linked (GlcNAc...) asparagine" evidence="2">
    <location>
        <position position="229"/>
    </location>
</feature>
<feature type="disulfide bond" evidence="1">
    <location>
        <begin position="319"/>
        <end position="323"/>
    </location>
</feature>
<gene>
    <name type="primary">LAP1</name>
    <name type="ORF">BDBG_07174</name>
</gene>
<name>LAP1_BLAGS</name>
<protein>
    <recommendedName>
        <fullName>Leucine aminopeptidase 1</fullName>
        <ecNumber>3.4.11.-</ecNumber>
    </recommendedName>
    <alternativeName>
        <fullName>Leucyl aminopeptidase 1</fullName>
        <shortName>LAP1</shortName>
    </alternativeName>
</protein>
<organism>
    <name type="scientific">Blastomyces gilchristii (strain SLH14081)</name>
    <name type="common">Blastomyces dermatitidis</name>
    <dbReference type="NCBI Taxonomy" id="559298"/>
    <lineage>
        <taxon>Eukaryota</taxon>
        <taxon>Fungi</taxon>
        <taxon>Dikarya</taxon>
        <taxon>Ascomycota</taxon>
        <taxon>Pezizomycotina</taxon>
        <taxon>Eurotiomycetes</taxon>
        <taxon>Eurotiomycetidae</taxon>
        <taxon>Onygenales</taxon>
        <taxon>Ajellomycetaceae</taxon>
        <taxon>Blastomyces</taxon>
    </lineage>
</organism>
<comment type="function">
    <text evidence="1">Extracellular aminopeptidase that allows assimilation of proteinaceous substrates.</text>
</comment>
<comment type="cofactor">
    <cofactor evidence="1">
        <name>Zn(2+)</name>
        <dbReference type="ChEBI" id="CHEBI:29105"/>
    </cofactor>
    <text evidence="1">Binds 2 Zn(2+) ions per subunit.</text>
</comment>
<comment type="subunit">
    <text evidence="1">Monomer.</text>
</comment>
<comment type="subcellular location">
    <subcellularLocation>
        <location evidence="1">Secreted</location>
    </subcellularLocation>
</comment>
<comment type="similarity">
    <text evidence="3">Belongs to the peptidase M28 family. M28E subfamily.</text>
</comment>
<sequence length="385" mass="42387">MKFPSFLSLGIAASTTALAALPDQKPIGDTIADVHLGKFLIELAPGDTRWVTEEEKWGLKRDGRKFFDITAEVEQNLFPRAFAKTAVTFPTDLHRTVEVMPLAAQLSKDNMFSHLTTFTSFHTRYYKSETGIQSATWLMKQIQKTISSSPASNARVEKFEHPWGQFSIIATVPGQSNKTVVIGAHQDSINMFLPSILAAPGADDDGSGTVTILEAFRVLLQSEAIAQGNATNTVEFHWYSAEEGGLLGSQAVFSKYKQDNKDIRAMLQQDMTGYSKGTLDAGELESVGVITDFVDEGLTEFIKKVVNGYCDIPFVLTECGYACSDHASASRFGYPSAFVIESKFEHSSQHIHTGQDTIETLDFNHMLQHAKMTLGLAYELAFADI</sequence>
<dbReference type="EC" id="3.4.11.-"/>
<dbReference type="EMBL" id="GG657464">
    <property type="protein sequence ID" value="OAT11742.1"/>
    <property type="molecule type" value="Genomic_DNA"/>
</dbReference>
<dbReference type="RefSeq" id="XP_002622663.1">
    <property type="nucleotide sequence ID" value="XM_002622617.1"/>
</dbReference>
<dbReference type="SMR" id="C5JX80"/>
<dbReference type="STRING" id="559298.C5JX80"/>
<dbReference type="MEROPS" id="M28.022"/>
<dbReference type="GlyCosmos" id="C5JX80">
    <property type="glycosylation" value="2 sites, No reported glycans"/>
</dbReference>
<dbReference type="GeneID" id="8502819"/>
<dbReference type="KEGG" id="bgh:BDBG_07174"/>
<dbReference type="VEuPathDB" id="FungiDB:BDBG_07174"/>
<dbReference type="HOGENOM" id="CLU_025866_0_0_1"/>
<dbReference type="OrthoDB" id="2214at2759"/>
<dbReference type="Proteomes" id="UP000002038">
    <property type="component" value="Unassembled WGS sequence"/>
</dbReference>
<dbReference type="GO" id="GO:0005576">
    <property type="term" value="C:extracellular region"/>
    <property type="evidence" value="ECO:0007669"/>
    <property type="project" value="UniProtKB-SubCell"/>
</dbReference>
<dbReference type="GO" id="GO:0004177">
    <property type="term" value="F:aminopeptidase activity"/>
    <property type="evidence" value="ECO:0007669"/>
    <property type="project" value="UniProtKB-KW"/>
</dbReference>
<dbReference type="GO" id="GO:0046872">
    <property type="term" value="F:metal ion binding"/>
    <property type="evidence" value="ECO:0007669"/>
    <property type="project" value="UniProtKB-KW"/>
</dbReference>
<dbReference type="GO" id="GO:0008235">
    <property type="term" value="F:metalloexopeptidase activity"/>
    <property type="evidence" value="ECO:0007669"/>
    <property type="project" value="InterPro"/>
</dbReference>
<dbReference type="GO" id="GO:0006508">
    <property type="term" value="P:proteolysis"/>
    <property type="evidence" value="ECO:0007669"/>
    <property type="project" value="UniProtKB-KW"/>
</dbReference>
<dbReference type="CDD" id="cd03879">
    <property type="entry name" value="M28_AAP"/>
    <property type="match status" value="1"/>
</dbReference>
<dbReference type="FunFam" id="3.40.630.10:FF:000042">
    <property type="entry name" value="Peptide hydrolase"/>
    <property type="match status" value="1"/>
</dbReference>
<dbReference type="Gene3D" id="3.40.630.10">
    <property type="entry name" value="Zn peptidases"/>
    <property type="match status" value="1"/>
</dbReference>
<dbReference type="InterPro" id="IPR045175">
    <property type="entry name" value="M28_fam"/>
</dbReference>
<dbReference type="InterPro" id="IPR007484">
    <property type="entry name" value="Peptidase_M28"/>
</dbReference>
<dbReference type="PANTHER" id="PTHR12147:SF56">
    <property type="entry name" value="AMINOPEPTIDASE YDR415C-RELATED"/>
    <property type="match status" value="1"/>
</dbReference>
<dbReference type="PANTHER" id="PTHR12147">
    <property type="entry name" value="METALLOPEPTIDASE M28 FAMILY MEMBER"/>
    <property type="match status" value="1"/>
</dbReference>
<dbReference type="Pfam" id="PF04389">
    <property type="entry name" value="Peptidase_M28"/>
    <property type="match status" value="1"/>
</dbReference>
<dbReference type="SUPFAM" id="SSF53187">
    <property type="entry name" value="Zn-dependent exopeptidases"/>
    <property type="match status" value="1"/>
</dbReference>